<dbReference type="EC" id="4.3.1.3" evidence="1"/>
<dbReference type="EMBL" id="CP001127">
    <property type="protein sequence ID" value="ACF90786.1"/>
    <property type="molecule type" value="Genomic_DNA"/>
</dbReference>
<dbReference type="RefSeq" id="WP_001092486.1">
    <property type="nucleotide sequence ID" value="NC_011094.1"/>
</dbReference>
<dbReference type="SMR" id="B4TQT6"/>
<dbReference type="KEGG" id="sew:SeSA_A0941"/>
<dbReference type="HOGENOM" id="CLU_014801_4_0_6"/>
<dbReference type="UniPathway" id="UPA00379">
    <property type="reaction ID" value="UER00549"/>
</dbReference>
<dbReference type="Proteomes" id="UP000001865">
    <property type="component" value="Chromosome"/>
</dbReference>
<dbReference type="GO" id="GO:0005737">
    <property type="term" value="C:cytoplasm"/>
    <property type="evidence" value="ECO:0007669"/>
    <property type="project" value="UniProtKB-SubCell"/>
</dbReference>
<dbReference type="GO" id="GO:0004397">
    <property type="term" value="F:histidine ammonia-lyase activity"/>
    <property type="evidence" value="ECO:0007669"/>
    <property type="project" value="UniProtKB-UniRule"/>
</dbReference>
<dbReference type="GO" id="GO:0019556">
    <property type="term" value="P:L-histidine catabolic process to glutamate and formamide"/>
    <property type="evidence" value="ECO:0007669"/>
    <property type="project" value="UniProtKB-UniPathway"/>
</dbReference>
<dbReference type="GO" id="GO:0019557">
    <property type="term" value="P:L-histidine catabolic process to glutamate and formate"/>
    <property type="evidence" value="ECO:0007669"/>
    <property type="project" value="UniProtKB-UniPathway"/>
</dbReference>
<dbReference type="CDD" id="cd00332">
    <property type="entry name" value="PAL-HAL"/>
    <property type="match status" value="1"/>
</dbReference>
<dbReference type="FunFam" id="1.10.275.10:FF:000005">
    <property type="entry name" value="Histidine ammonia-lyase"/>
    <property type="match status" value="1"/>
</dbReference>
<dbReference type="FunFam" id="1.20.200.10:FF:000003">
    <property type="entry name" value="Histidine ammonia-lyase"/>
    <property type="match status" value="1"/>
</dbReference>
<dbReference type="Gene3D" id="1.20.200.10">
    <property type="entry name" value="Fumarase/aspartase (Central domain)"/>
    <property type="match status" value="1"/>
</dbReference>
<dbReference type="Gene3D" id="1.10.275.10">
    <property type="entry name" value="Fumarase/aspartase (N-terminal domain)"/>
    <property type="match status" value="1"/>
</dbReference>
<dbReference type="HAMAP" id="MF_00229">
    <property type="entry name" value="His_ammonia_lyase"/>
    <property type="match status" value="1"/>
</dbReference>
<dbReference type="InterPro" id="IPR001106">
    <property type="entry name" value="Aromatic_Lyase"/>
</dbReference>
<dbReference type="InterPro" id="IPR024083">
    <property type="entry name" value="Fumarase/histidase_N"/>
</dbReference>
<dbReference type="InterPro" id="IPR005921">
    <property type="entry name" value="HutH"/>
</dbReference>
<dbReference type="InterPro" id="IPR008948">
    <property type="entry name" value="L-Aspartase-like"/>
</dbReference>
<dbReference type="InterPro" id="IPR022313">
    <property type="entry name" value="Phe/His_NH3-lyase_AS"/>
</dbReference>
<dbReference type="NCBIfam" id="TIGR01225">
    <property type="entry name" value="hutH"/>
    <property type="match status" value="1"/>
</dbReference>
<dbReference type="NCBIfam" id="NF006871">
    <property type="entry name" value="PRK09367.1"/>
    <property type="match status" value="1"/>
</dbReference>
<dbReference type="PANTHER" id="PTHR10362">
    <property type="entry name" value="HISTIDINE AMMONIA-LYASE"/>
    <property type="match status" value="1"/>
</dbReference>
<dbReference type="Pfam" id="PF00221">
    <property type="entry name" value="Lyase_aromatic"/>
    <property type="match status" value="1"/>
</dbReference>
<dbReference type="SUPFAM" id="SSF48557">
    <property type="entry name" value="L-aspartase-like"/>
    <property type="match status" value="1"/>
</dbReference>
<dbReference type="PROSITE" id="PS00488">
    <property type="entry name" value="PAL_HISTIDASE"/>
    <property type="match status" value="1"/>
</dbReference>
<evidence type="ECO:0000255" key="1">
    <source>
        <dbReference type="HAMAP-Rule" id="MF_00229"/>
    </source>
</evidence>
<organism>
    <name type="scientific">Salmonella schwarzengrund (strain CVM19633)</name>
    <dbReference type="NCBI Taxonomy" id="439843"/>
    <lineage>
        <taxon>Bacteria</taxon>
        <taxon>Pseudomonadati</taxon>
        <taxon>Pseudomonadota</taxon>
        <taxon>Gammaproteobacteria</taxon>
        <taxon>Enterobacterales</taxon>
        <taxon>Enterobacteriaceae</taxon>
        <taxon>Salmonella</taxon>
    </lineage>
</organism>
<reference key="1">
    <citation type="journal article" date="2011" name="J. Bacteriol.">
        <title>Comparative genomics of 28 Salmonella enterica isolates: evidence for CRISPR-mediated adaptive sublineage evolution.</title>
        <authorList>
            <person name="Fricke W.F."/>
            <person name="Mammel M.K."/>
            <person name="McDermott P.F."/>
            <person name="Tartera C."/>
            <person name="White D.G."/>
            <person name="Leclerc J.E."/>
            <person name="Ravel J."/>
            <person name="Cebula T.A."/>
        </authorList>
    </citation>
    <scope>NUCLEOTIDE SEQUENCE [LARGE SCALE GENOMIC DNA]</scope>
    <source>
        <strain>CVM19633</strain>
    </source>
</reference>
<name>HUTH_SALSV</name>
<accession>B4TQT6</accession>
<feature type="chain" id="PRO_1000100453" description="Histidine ammonia-lyase">
    <location>
        <begin position="1"/>
        <end position="506"/>
    </location>
</feature>
<feature type="modified residue" description="2,3-didehydroalanine (Ser)" evidence="1">
    <location>
        <position position="144"/>
    </location>
</feature>
<feature type="cross-link" description="5-imidazolinone (Ala-Gly)" evidence="1">
    <location>
        <begin position="143"/>
        <end position="145"/>
    </location>
</feature>
<keyword id="KW-0963">Cytoplasm</keyword>
<keyword id="KW-0369">Histidine metabolism</keyword>
<keyword id="KW-0456">Lyase</keyword>
<gene>
    <name evidence="1" type="primary">hutH</name>
    <name type="ordered locus">SeSA_A0941</name>
</gene>
<sequence>MNTITLTPGQLSLSQLYDVWRHPVQLRLDASAIDGINASVACVNDIVAEGRTAYGINTGFGLLAQTRIADEDLQNLQRSLVLSHAAGVGDPLDDAMVRLIMVLKINSLARGFSGIRLSVIEALIALVNAGVYPLIPAKGSVGASGDLAPLAHLSLTLLGEGKARWQGEWLPAQTALKKAGLEPVALAAKEGLALLNGTQASTAFALRGLFEAQELFASAVVCGALTTEAVLGSRRPFDARIHAARGQQGQIDVARLFRHLLTDTSAIAESHHHCHKVQDPYSLRCQPQVMGACLTQLRQTKEVLLAEANAVSDNPLVFADAGEVISGGNFHAEPVAMAADNLALAIAEIGALSERRIALMMDKHMSQLPPFLVKNGGVNSGFMIAQVTAAALASENKALAHPHSVDSLPTSANQEDHVSMAPAAGRRLWEMAANTRGIIAVEWLAACQGIDLREGLTSSPLLEQARQTLRERVAHYTQDRFFAPDIECATALLAQGALQRLVPDFM</sequence>
<proteinExistence type="inferred from homology"/>
<comment type="catalytic activity">
    <reaction evidence="1">
        <text>L-histidine = trans-urocanate + NH4(+)</text>
        <dbReference type="Rhea" id="RHEA:21232"/>
        <dbReference type="ChEBI" id="CHEBI:17771"/>
        <dbReference type="ChEBI" id="CHEBI:28938"/>
        <dbReference type="ChEBI" id="CHEBI:57595"/>
        <dbReference type="EC" id="4.3.1.3"/>
    </reaction>
</comment>
<comment type="pathway">
    <text evidence="1">Amino-acid degradation; L-histidine degradation into L-glutamate; N-formimidoyl-L-glutamate from L-histidine: step 1/3.</text>
</comment>
<comment type="subcellular location">
    <subcellularLocation>
        <location evidence="1">Cytoplasm</location>
    </subcellularLocation>
</comment>
<comment type="PTM">
    <text evidence="1">Contains an active site 4-methylidene-imidazol-5-one (MIO), which is formed autocatalytically by cyclization and dehydration of residues Ala-Ser-Gly.</text>
</comment>
<comment type="similarity">
    <text evidence="1">Belongs to the PAL/histidase family.</text>
</comment>
<protein>
    <recommendedName>
        <fullName evidence="1">Histidine ammonia-lyase</fullName>
        <shortName evidence="1">Histidase</shortName>
        <ecNumber evidence="1">4.3.1.3</ecNumber>
    </recommendedName>
</protein>